<reference key="1">
    <citation type="journal article" date="2005" name="J. Virol.">
        <title>Genomic sequence analysis of Epstein-Barr virus strain GD1 from a nasopharyngeal carcinoma patient.</title>
        <authorList>
            <person name="Zeng M.-S."/>
            <person name="Li D.-J."/>
            <person name="Liu Q.-L."/>
            <person name="Song L.-B."/>
            <person name="Li M.-Z."/>
            <person name="Zhang R.-H."/>
            <person name="Yu X.-J."/>
            <person name="Wang H.-M."/>
            <person name="Ernberg I."/>
            <person name="Zeng Y.-X."/>
        </authorList>
    </citation>
    <scope>NUCLEOTIDE SEQUENCE [LARGE SCALE GENOMIC DNA]</scope>
</reference>
<keyword id="KW-1038">Host endoplasmic reticulum</keyword>
<keyword id="KW-1043">Host membrane</keyword>
<keyword id="KW-0945">Host-virus interaction</keyword>
<keyword id="KW-1080">Inhibition of host adaptive immune response by virus</keyword>
<keyword id="KW-1107">Inhibition of host TAP by virus</keyword>
<keyword id="KW-0472">Membrane</keyword>
<keyword id="KW-0812">Transmembrane</keyword>
<keyword id="KW-1133">Transmembrane helix</keyword>
<keyword id="KW-0899">Viral immunoevasion</keyword>
<gene>
    <name type="ORF">BNLF2a</name>
</gene>
<dbReference type="EMBL" id="AY961628">
    <property type="protein sequence ID" value="AAY41159.1"/>
    <property type="molecule type" value="Genomic_DNA"/>
</dbReference>
<dbReference type="RefSeq" id="YP_401721.1">
    <property type="nucleotide sequence ID" value="NC_007605.1"/>
</dbReference>
<dbReference type="SMR" id="P0C738"/>
<dbReference type="IntAct" id="P0C738">
    <property type="interactions" value="13"/>
</dbReference>
<dbReference type="MINT" id="P0C738"/>
<dbReference type="DNASU" id="3783720"/>
<dbReference type="GeneID" id="3783720"/>
<dbReference type="KEGG" id="vg:3783720"/>
<dbReference type="Proteomes" id="UP000007641">
    <property type="component" value="Genome"/>
</dbReference>
<dbReference type="GO" id="GO:0044167">
    <property type="term" value="C:host cell endoplasmic reticulum membrane"/>
    <property type="evidence" value="ECO:0007669"/>
    <property type="project" value="UniProtKB-SubCell"/>
</dbReference>
<dbReference type="GO" id="GO:0016020">
    <property type="term" value="C:membrane"/>
    <property type="evidence" value="ECO:0007669"/>
    <property type="project" value="UniProtKB-KW"/>
</dbReference>
<dbReference type="GO" id="GO:0039588">
    <property type="term" value="P:symbiont-mediated suppression of host antigen processing and presentation"/>
    <property type="evidence" value="ECO:0007669"/>
    <property type="project" value="UniProtKB-KW"/>
</dbReference>
<organism>
    <name type="scientific">Epstein-Barr virus (strain GD1)</name>
    <name type="common">HHV-4</name>
    <name type="synonym">Human gammaherpesvirus 4</name>
    <dbReference type="NCBI Taxonomy" id="10376"/>
    <lineage>
        <taxon>Viruses</taxon>
        <taxon>Duplodnaviria</taxon>
        <taxon>Heunggongvirae</taxon>
        <taxon>Peploviricota</taxon>
        <taxon>Herviviricetes</taxon>
        <taxon>Herpesvirales</taxon>
        <taxon>Orthoherpesviridae</taxon>
        <taxon>Gammaherpesvirinae</taxon>
        <taxon>Lymphocryptovirus</taxon>
        <taxon>Lymphocryptovirus humangamma4</taxon>
    </lineage>
</organism>
<protein>
    <recommendedName>
        <fullName>Protein BNLF2a</fullName>
    </recommendedName>
</protein>
<proteinExistence type="inferred from homology"/>
<feature type="chain" id="PRO_0000382429" description="Protein BNLF2a">
    <location>
        <begin position="1"/>
        <end position="60"/>
    </location>
</feature>
<feature type="transmembrane region" description="Helical" evidence="2">
    <location>
        <begin position="41"/>
        <end position="59"/>
    </location>
</feature>
<feature type="region of interest" description="Disordered" evidence="3">
    <location>
        <begin position="14"/>
        <end position="34"/>
    </location>
</feature>
<feature type="compositionally biased region" description="Polar residues" evidence="3">
    <location>
        <begin position="14"/>
        <end position="26"/>
    </location>
</feature>
<name>BNL2A_EBVG</name>
<sequence>MVHVLERALLEQQSSACGLPGSSTETRPSHPCPEDPDVSRLRLLLVVLCVLFGLLCLLLI</sequence>
<organismHost>
    <name type="scientific">Homo sapiens</name>
    <name type="common">Human</name>
    <dbReference type="NCBI Taxonomy" id="9606"/>
</organismHost>
<evidence type="ECO:0000250" key="1"/>
<evidence type="ECO:0000255" key="2"/>
<evidence type="ECO:0000256" key="3">
    <source>
        <dbReference type="SAM" id="MobiDB-lite"/>
    </source>
</evidence>
<evidence type="ECO:0000305" key="4"/>
<accession>P0C738</accession>
<accession>Q04361</accession>
<accession>Q8AZJ2</accession>
<comment type="function">
    <text>Participates in viral evasion from HLA class I-restricted T-cell immunity. Associates with host TAP1 and TAP2 and prevents TAP-mediated peptide transport and subsequent loading.</text>
</comment>
<comment type="subunit">
    <text evidence="1">Interacts with host TAP1 and TAP2.</text>
</comment>
<comment type="subcellular location">
    <subcellularLocation>
        <location evidence="4">Host endoplasmic reticulum membrane</location>
        <topology evidence="4">Single-pass membrane protein</topology>
    </subcellularLocation>
</comment>
<comment type="similarity">
    <text evidence="4">Belongs to the lymphocryptovirus BNLF2a family.</text>
</comment>